<organism>
    <name type="scientific">Synechococcus sp. (strain JA-2-3B'a(2-13))</name>
    <name type="common">Cyanobacteria bacterium Yellowstone B-Prime</name>
    <dbReference type="NCBI Taxonomy" id="321332"/>
    <lineage>
        <taxon>Bacteria</taxon>
        <taxon>Bacillati</taxon>
        <taxon>Cyanobacteriota</taxon>
        <taxon>Cyanophyceae</taxon>
        <taxon>Synechococcales</taxon>
        <taxon>Synechococcaceae</taxon>
        <taxon>Synechococcus</taxon>
    </lineage>
</organism>
<keyword id="KW-0067">ATP-binding</keyword>
<keyword id="KW-0378">Hydrolase</keyword>
<keyword id="KW-0472">Membrane</keyword>
<keyword id="KW-0479">Metal-binding</keyword>
<keyword id="KW-0482">Metalloprotease</keyword>
<keyword id="KW-0547">Nucleotide-binding</keyword>
<keyword id="KW-0645">Protease</keyword>
<keyword id="KW-1185">Reference proteome</keyword>
<keyword id="KW-0793">Thylakoid</keyword>
<keyword id="KW-0812">Transmembrane</keyword>
<keyword id="KW-1133">Transmembrane helix</keyword>
<keyword id="KW-0862">Zinc</keyword>
<name>FTSH_SYNJB</name>
<comment type="function">
    <text evidence="1">Acts as a processive, ATP-dependent zinc metallopeptidase for both cytoplasmic and membrane proteins. Plays a role in the quality control of integral membrane proteins.</text>
</comment>
<comment type="cofactor">
    <cofactor evidence="1">
        <name>Zn(2+)</name>
        <dbReference type="ChEBI" id="CHEBI:29105"/>
    </cofactor>
    <text evidence="1">Binds 1 zinc ion per subunit.</text>
</comment>
<comment type="subunit">
    <text evidence="1">Homohexamer.</text>
</comment>
<comment type="subcellular location">
    <subcellularLocation>
        <location evidence="1">Cellular thylakoid membrane</location>
        <topology evidence="1">Multi-pass membrane protein</topology>
        <orientation evidence="1">Stromal side</orientation>
    </subcellularLocation>
</comment>
<comment type="similarity">
    <text evidence="1">In the central section; belongs to the AAA ATPase family.</text>
</comment>
<comment type="similarity">
    <text evidence="1">In the C-terminal section; belongs to the peptidase M41 family.</text>
</comment>
<dbReference type="EC" id="3.4.24.-" evidence="1"/>
<dbReference type="EMBL" id="CP000240">
    <property type="protein sequence ID" value="ABD01619.1"/>
    <property type="molecule type" value="Genomic_DNA"/>
</dbReference>
<dbReference type="RefSeq" id="WP_011432278.1">
    <property type="nucleotide sequence ID" value="NC_007776.1"/>
</dbReference>
<dbReference type="SMR" id="Q2JNP0"/>
<dbReference type="STRING" id="321332.CYB_0631"/>
<dbReference type="MEROPS" id="M41.020"/>
<dbReference type="KEGG" id="cyb:CYB_0631"/>
<dbReference type="eggNOG" id="COG0465">
    <property type="taxonomic scope" value="Bacteria"/>
</dbReference>
<dbReference type="HOGENOM" id="CLU_000688_16_2_3"/>
<dbReference type="OrthoDB" id="568359at2"/>
<dbReference type="Proteomes" id="UP000001938">
    <property type="component" value="Chromosome"/>
</dbReference>
<dbReference type="GO" id="GO:0031676">
    <property type="term" value="C:plasma membrane-derived thylakoid membrane"/>
    <property type="evidence" value="ECO:0007669"/>
    <property type="project" value="UniProtKB-SubCell"/>
</dbReference>
<dbReference type="GO" id="GO:0005524">
    <property type="term" value="F:ATP binding"/>
    <property type="evidence" value="ECO:0007669"/>
    <property type="project" value="UniProtKB-UniRule"/>
</dbReference>
<dbReference type="GO" id="GO:0016887">
    <property type="term" value="F:ATP hydrolysis activity"/>
    <property type="evidence" value="ECO:0007669"/>
    <property type="project" value="UniProtKB-UniRule"/>
</dbReference>
<dbReference type="GO" id="GO:0004176">
    <property type="term" value="F:ATP-dependent peptidase activity"/>
    <property type="evidence" value="ECO:0007669"/>
    <property type="project" value="InterPro"/>
</dbReference>
<dbReference type="GO" id="GO:0004222">
    <property type="term" value="F:metalloendopeptidase activity"/>
    <property type="evidence" value="ECO:0007669"/>
    <property type="project" value="InterPro"/>
</dbReference>
<dbReference type="GO" id="GO:0008270">
    <property type="term" value="F:zinc ion binding"/>
    <property type="evidence" value="ECO:0007669"/>
    <property type="project" value="UniProtKB-UniRule"/>
</dbReference>
<dbReference type="GO" id="GO:0030163">
    <property type="term" value="P:protein catabolic process"/>
    <property type="evidence" value="ECO:0007669"/>
    <property type="project" value="UniProtKB-UniRule"/>
</dbReference>
<dbReference type="GO" id="GO:0006508">
    <property type="term" value="P:proteolysis"/>
    <property type="evidence" value="ECO:0007669"/>
    <property type="project" value="UniProtKB-KW"/>
</dbReference>
<dbReference type="CDD" id="cd19501">
    <property type="entry name" value="RecA-like_FtsH"/>
    <property type="match status" value="1"/>
</dbReference>
<dbReference type="FunFam" id="1.10.8.60:FF:000001">
    <property type="entry name" value="ATP-dependent zinc metalloprotease FtsH"/>
    <property type="match status" value="1"/>
</dbReference>
<dbReference type="FunFam" id="1.20.58.760:FF:000001">
    <property type="entry name" value="ATP-dependent zinc metalloprotease FtsH"/>
    <property type="match status" value="1"/>
</dbReference>
<dbReference type="FunFam" id="3.40.50.300:FF:000001">
    <property type="entry name" value="ATP-dependent zinc metalloprotease FtsH"/>
    <property type="match status" value="1"/>
</dbReference>
<dbReference type="Gene3D" id="1.10.8.60">
    <property type="match status" value="1"/>
</dbReference>
<dbReference type="Gene3D" id="3.30.720.210">
    <property type="match status" value="1"/>
</dbReference>
<dbReference type="Gene3D" id="3.40.50.300">
    <property type="entry name" value="P-loop containing nucleotide triphosphate hydrolases"/>
    <property type="match status" value="1"/>
</dbReference>
<dbReference type="Gene3D" id="1.20.58.760">
    <property type="entry name" value="Peptidase M41"/>
    <property type="match status" value="1"/>
</dbReference>
<dbReference type="HAMAP" id="MF_01458">
    <property type="entry name" value="FtsH"/>
    <property type="match status" value="1"/>
</dbReference>
<dbReference type="InterPro" id="IPR003593">
    <property type="entry name" value="AAA+_ATPase"/>
</dbReference>
<dbReference type="InterPro" id="IPR041569">
    <property type="entry name" value="AAA_lid_3"/>
</dbReference>
<dbReference type="InterPro" id="IPR003959">
    <property type="entry name" value="ATPase_AAA_core"/>
</dbReference>
<dbReference type="InterPro" id="IPR003960">
    <property type="entry name" value="ATPase_AAA_CS"/>
</dbReference>
<dbReference type="InterPro" id="IPR005936">
    <property type="entry name" value="FtsH"/>
</dbReference>
<dbReference type="InterPro" id="IPR027417">
    <property type="entry name" value="P-loop_NTPase"/>
</dbReference>
<dbReference type="InterPro" id="IPR011546">
    <property type="entry name" value="Pept_M41_FtsH_extracell"/>
</dbReference>
<dbReference type="InterPro" id="IPR000642">
    <property type="entry name" value="Peptidase_M41"/>
</dbReference>
<dbReference type="InterPro" id="IPR037219">
    <property type="entry name" value="Peptidase_M41-like"/>
</dbReference>
<dbReference type="NCBIfam" id="TIGR01241">
    <property type="entry name" value="FtsH_fam"/>
    <property type="match status" value="1"/>
</dbReference>
<dbReference type="PANTHER" id="PTHR23076:SF113">
    <property type="entry name" value="ATP-DEPENDENT ZINC METALLOPROTEASE FTSH 1, CHLOROPLASTIC-RELATED"/>
    <property type="match status" value="1"/>
</dbReference>
<dbReference type="PANTHER" id="PTHR23076">
    <property type="entry name" value="METALLOPROTEASE M41 FTSH"/>
    <property type="match status" value="1"/>
</dbReference>
<dbReference type="Pfam" id="PF00004">
    <property type="entry name" value="AAA"/>
    <property type="match status" value="1"/>
</dbReference>
<dbReference type="Pfam" id="PF17862">
    <property type="entry name" value="AAA_lid_3"/>
    <property type="match status" value="1"/>
</dbReference>
<dbReference type="Pfam" id="PF06480">
    <property type="entry name" value="FtsH_ext"/>
    <property type="match status" value="1"/>
</dbReference>
<dbReference type="Pfam" id="PF01434">
    <property type="entry name" value="Peptidase_M41"/>
    <property type="match status" value="1"/>
</dbReference>
<dbReference type="SMART" id="SM00382">
    <property type="entry name" value="AAA"/>
    <property type="match status" value="1"/>
</dbReference>
<dbReference type="SUPFAM" id="SSF140990">
    <property type="entry name" value="FtsH protease domain-like"/>
    <property type="match status" value="1"/>
</dbReference>
<dbReference type="SUPFAM" id="SSF52540">
    <property type="entry name" value="P-loop containing nucleoside triphosphate hydrolases"/>
    <property type="match status" value="1"/>
</dbReference>
<dbReference type="PROSITE" id="PS00674">
    <property type="entry name" value="AAA"/>
    <property type="match status" value="1"/>
</dbReference>
<feature type="chain" id="PRO_0000400404" description="ATP-dependent zinc metalloprotease FtsH">
    <location>
        <begin position="1"/>
        <end position="638"/>
    </location>
</feature>
<feature type="topological domain" description="Cytoplasmic" evidence="1">
    <location>
        <begin position="1"/>
        <end position="11"/>
    </location>
</feature>
<feature type="transmembrane region" description="Helical" evidence="1">
    <location>
        <begin position="12"/>
        <end position="32"/>
    </location>
</feature>
<feature type="topological domain" description="Lumenal" evidence="1">
    <location>
        <begin position="33"/>
        <end position="114"/>
    </location>
</feature>
<feature type="transmembrane region" description="Helical" evidence="1">
    <location>
        <begin position="115"/>
        <end position="135"/>
    </location>
</feature>
<feature type="topological domain" description="Cytoplasmic" evidence="1">
    <location>
        <begin position="136"/>
        <end position="638"/>
    </location>
</feature>
<feature type="active site" evidence="1">
    <location>
        <position position="432"/>
    </location>
</feature>
<feature type="binding site" evidence="1">
    <location>
        <begin position="209"/>
        <end position="216"/>
    </location>
    <ligand>
        <name>ATP</name>
        <dbReference type="ChEBI" id="CHEBI:30616"/>
    </ligand>
</feature>
<feature type="binding site" evidence="1">
    <location>
        <position position="431"/>
    </location>
    <ligand>
        <name>Zn(2+)</name>
        <dbReference type="ChEBI" id="CHEBI:29105"/>
        <note>catalytic</note>
    </ligand>
</feature>
<feature type="binding site" evidence="1">
    <location>
        <position position="435"/>
    </location>
    <ligand>
        <name>Zn(2+)</name>
        <dbReference type="ChEBI" id="CHEBI:29105"/>
        <note>catalytic</note>
    </ligand>
</feature>
<feature type="binding site" evidence="1">
    <location>
        <position position="510"/>
    </location>
    <ligand>
        <name>Zn(2+)</name>
        <dbReference type="ChEBI" id="CHEBI:29105"/>
        <note>catalytic</note>
    </ligand>
</feature>
<protein>
    <recommendedName>
        <fullName evidence="1">ATP-dependent zinc metalloprotease FtsH</fullName>
        <ecNumber evidence="1">3.4.24.-</ecNumber>
    </recommendedName>
</protein>
<evidence type="ECO:0000255" key="1">
    <source>
        <dbReference type="HAMAP-Rule" id="MF_01458"/>
    </source>
</evidence>
<accession>Q2JNP0</accession>
<reference key="1">
    <citation type="journal article" date="2007" name="ISME J.">
        <title>Population level functional diversity in a microbial community revealed by comparative genomic and metagenomic analyses.</title>
        <authorList>
            <person name="Bhaya D."/>
            <person name="Grossman A.R."/>
            <person name="Steunou A.-S."/>
            <person name="Khuri N."/>
            <person name="Cohan F.M."/>
            <person name="Hamamura N."/>
            <person name="Melendrez M.C."/>
            <person name="Bateson M.M."/>
            <person name="Ward D.M."/>
            <person name="Heidelberg J.F."/>
        </authorList>
    </citation>
    <scope>NUCLEOTIDE SEQUENCE [LARGE SCALE GENOMIC DNA]</scope>
    <source>
        <strain>JA-2-3B'a(2-13)</strain>
    </source>
</reference>
<gene>
    <name evidence="1" type="primary">ftsH</name>
    <name type="ordered locus">CYB_0631</name>
</gene>
<sequence length="638" mass="69689">MSQKGKNKKWRSAGLYALLAIVLISLATTFLGNRPPERLEISYSDLISRVERGEVSKVLVETAPDGRQVAIAEAEINNRATQVQVNLPPLTPEFENTLVANGVELAVRPVQEEGLLGRILSTFFLPVLLLLGLFFLLRRAQNGPGSQALNFGKSRARVQMEPKTQITFNDVAGIDQAKLELAEVVDFLKNSERFTALGAKIPRGVLLVGPPGTGKTLLARAVAGEAGVPFFSISGSEFVEMFVGVGASRVRDLFEQAKQNAPCIVFIDEIDAVGRQRGAGLGGGNDEREQTLNQLLTEMDGFEGNSGIIVIAATNRPDVLDAALLRPGRFDRQVTVDRPDFQGRLEILKVHARGKTLSADVDLEKLARRTPGFTGADLANLLNEAAILAARRNLTEISMDEINDAVDRVLAGPEKKDRLMSERRKELVAYHEAGHALVGSLLPNYDPIQKVTIIPRGQAGGLTWFMPSDDDMGLTTRAHLKNMMTVALGGRVAEEVVYGESEITTGAASDLQQVARIARNMVTRFGMSDRLGNVALGRQYANIFLGREIAAERDFSEETAALIDEEVRRLVNEAYQRATYLIRENRALLDRIARRLVEAETIDGEELQAIIDNSEVVMLPPEEEPEPLTLPMAVNAGA</sequence>
<proteinExistence type="inferred from homology"/>